<name>D2HDH_ORYSJ</name>
<organism>
    <name type="scientific">Oryza sativa subsp. japonica</name>
    <name type="common">Rice</name>
    <dbReference type="NCBI Taxonomy" id="39947"/>
    <lineage>
        <taxon>Eukaryota</taxon>
        <taxon>Viridiplantae</taxon>
        <taxon>Streptophyta</taxon>
        <taxon>Embryophyta</taxon>
        <taxon>Tracheophyta</taxon>
        <taxon>Spermatophyta</taxon>
        <taxon>Magnoliopsida</taxon>
        <taxon>Liliopsida</taxon>
        <taxon>Poales</taxon>
        <taxon>Poaceae</taxon>
        <taxon>BOP clade</taxon>
        <taxon>Oryzoideae</taxon>
        <taxon>Oryzeae</taxon>
        <taxon>Oryzinae</taxon>
        <taxon>Oryza</taxon>
        <taxon>Oryza sativa</taxon>
    </lineage>
</organism>
<feature type="transit peptide" description="Mitochondrion" evidence="2">
    <location>
        <begin position="1"/>
        <end position="80"/>
    </location>
</feature>
<feature type="chain" id="PRO_0000393390" description="Probable D-2-hydroxyglutarate dehydrogenase, mitochondrial">
    <location>
        <begin position="81"/>
        <end position="559"/>
    </location>
</feature>
<feature type="domain" description="FAD-binding PCMH-type" evidence="3">
    <location>
        <begin position="131"/>
        <end position="310"/>
    </location>
</feature>
<dbReference type="EC" id="1.1.99.39"/>
<dbReference type="EMBL" id="AP004384">
    <property type="protein sequence ID" value="BAC79943.1"/>
    <property type="molecule type" value="Genomic_DNA"/>
</dbReference>
<dbReference type="EMBL" id="AP005179">
    <property type="protein sequence ID" value="BAD31069.1"/>
    <property type="molecule type" value="Genomic_DNA"/>
</dbReference>
<dbReference type="EMBL" id="AP014963">
    <property type="status" value="NOT_ANNOTATED_CDS"/>
    <property type="molecule type" value="Genomic_DNA"/>
</dbReference>
<dbReference type="EMBL" id="CM000144">
    <property type="protein sequence ID" value="EEE66707.1"/>
    <property type="status" value="ALT_SEQ"/>
    <property type="molecule type" value="Genomic_DNA"/>
</dbReference>
<dbReference type="RefSeq" id="XP_015646834.1">
    <property type="nucleotide sequence ID" value="XM_015791348.1"/>
</dbReference>
<dbReference type="RefSeq" id="XP_015646835.1">
    <property type="nucleotide sequence ID" value="XM_015791349.1"/>
</dbReference>
<dbReference type="SMR" id="Q7XI14"/>
<dbReference type="FunCoup" id="Q7XI14">
    <property type="interactions" value="1047"/>
</dbReference>
<dbReference type="STRING" id="39947.Q7XI14"/>
<dbReference type="PaxDb" id="39947-Q7XI14"/>
<dbReference type="EnsemblPlants" id="Os07t0187200-02">
    <property type="protein sequence ID" value="Os07t0187200-02"/>
    <property type="gene ID" value="Os07g0187200"/>
</dbReference>
<dbReference type="Gramene" id="Os07t0187200-02">
    <property type="protein sequence ID" value="Os07t0187200-02"/>
    <property type="gene ID" value="Os07g0187200"/>
</dbReference>
<dbReference type="eggNOG" id="KOG1232">
    <property type="taxonomic scope" value="Eukaryota"/>
</dbReference>
<dbReference type="InParanoid" id="Q7XI14"/>
<dbReference type="OrthoDB" id="5332616at2759"/>
<dbReference type="Proteomes" id="UP000000763">
    <property type="component" value="Chromosome 7"/>
</dbReference>
<dbReference type="Proteomes" id="UP000007752">
    <property type="component" value="Chromosome 7"/>
</dbReference>
<dbReference type="Proteomes" id="UP000059680">
    <property type="component" value="Chromosome 7"/>
</dbReference>
<dbReference type="GO" id="GO:0005739">
    <property type="term" value="C:mitochondrion"/>
    <property type="evidence" value="ECO:0000318"/>
    <property type="project" value="GO_Central"/>
</dbReference>
<dbReference type="GO" id="GO:0051990">
    <property type="term" value="F:(R)-2-hydroxyglutarate dehydrogenase activity"/>
    <property type="evidence" value="ECO:0007669"/>
    <property type="project" value="UniProtKB-EC"/>
</dbReference>
<dbReference type="GO" id="GO:0047545">
    <property type="term" value="F:2-hydroxyglutarate dehydrogenase activity"/>
    <property type="evidence" value="ECO:0007669"/>
    <property type="project" value="EnsemblPlants"/>
</dbReference>
<dbReference type="GO" id="GO:0071949">
    <property type="term" value="F:FAD binding"/>
    <property type="evidence" value="ECO:0007669"/>
    <property type="project" value="InterPro"/>
</dbReference>
<dbReference type="GO" id="GO:0010230">
    <property type="term" value="P:alternative respiration"/>
    <property type="evidence" value="ECO:0007669"/>
    <property type="project" value="EnsemblPlants"/>
</dbReference>
<dbReference type="GO" id="GO:0009853">
    <property type="term" value="P:photorespiration"/>
    <property type="evidence" value="ECO:0007669"/>
    <property type="project" value="EnsemblPlants"/>
</dbReference>
<dbReference type="FunFam" id="3.30.70.2190:FF:000001">
    <property type="entry name" value="D-2-hydroxyglutarate dehydrogenase mitochondrial"/>
    <property type="match status" value="1"/>
</dbReference>
<dbReference type="FunFam" id="3.30.70.2740:FF:000002">
    <property type="entry name" value="D-2-hydroxyglutarate dehydrogenase mitochondrial"/>
    <property type="match status" value="1"/>
</dbReference>
<dbReference type="FunFam" id="3.30.43.10:FF:000002">
    <property type="entry name" value="D-2-hydroxyglutarate dehydrogenase, mitochondrial"/>
    <property type="match status" value="1"/>
</dbReference>
<dbReference type="FunFam" id="3.30.465.10:FF:000001">
    <property type="entry name" value="D-2-hydroxyglutarate dehydrogenase, mitochondrial"/>
    <property type="match status" value="1"/>
</dbReference>
<dbReference type="FunFam" id="1.10.45.10:FF:000001">
    <property type="entry name" value="D-lactate dehydrogenase mitochondrial"/>
    <property type="match status" value="1"/>
</dbReference>
<dbReference type="Gene3D" id="3.30.465.10">
    <property type="match status" value="1"/>
</dbReference>
<dbReference type="Gene3D" id="3.30.70.2190">
    <property type="match status" value="1"/>
</dbReference>
<dbReference type="Gene3D" id="3.30.70.2740">
    <property type="match status" value="1"/>
</dbReference>
<dbReference type="Gene3D" id="3.30.43.10">
    <property type="entry name" value="Uridine Diphospho-n-acetylenolpyruvylglucosamine Reductase, domain 2"/>
    <property type="match status" value="1"/>
</dbReference>
<dbReference type="Gene3D" id="1.10.45.10">
    <property type="entry name" value="Vanillyl-alcohol Oxidase, Chain A, domain 4"/>
    <property type="match status" value="1"/>
</dbReference>
<dbReference type="InterPro" id="IPR004113">
    <property type="entry name" value="FAD-bd_oxidored_4_C"/>
</dbReference>
<dbReference type="InterPro" id="IPR016166">
    <property type="entry name" value="FAD-bd_PCMH"/>
</dbReference>
<dbReference type="InterPro" id="IPR036318">
    <property type="entry name" value="FAD-bd_PCMH-like_sf"/>
</dbReference>
<dbReference type="InterPro" id="IPR016167">
    <property type="entry name" value="FAD-bd_PCMH_sub1"/>
</dbReference>
<dbReference type="InterPro" id="IPR016169">
    <property type="entry name" value="FAD-bd_PCMH_sub2"/>
</dbReference>
<dbReference type="InterPro" id="IPR016164">
    <property type="entry name" value="FAD-linked_Oxase-like_C"/>
</dbReference>
<dbReference type="InterPro" id="IPR051264">
    <property type="entry name" value="FAD-oxidored/transferase_4"/>
</dbReference>
<dbReference type="InterPro" id="IPR006094">
    <property type="entry name" value="Oxid_FAD_bind_N"/>
</dbReference>
<dbReference type="InterPro" id="IPR016171">
    <property type="entry name" value="Vanillyl_alc_oxidase_C-sub2"/>
</dbReference>
<dbReference type="PANTHER" id="PTHR43716">
    <property type="entry name" value="D-2-HYDROXYGLUTARATE DEHYDROGENASE, MITOCHONDRIAL"/>
    <property type="match status" value="1"/>
</dbReference>
<dbReference type="PANTHER" id="PTHR43716:SF1">
    <property type="entry name" value="D-2-HYDROXYGLUTARATE DEHYDROGENASE, MITOCHONDRIAL"/>
    <property type="match status" value="1"/>
</dbReference>
<dbReference type="Pfam" id="PF02913">
    <property type="entry name" value="FAD-oxidase_C"/>
    <property type="match status" value="1"/>
</dbReference>
<dbReference type="Pfam" id="PF01565">
    <property type="entry name" value="FAD_binding_4"/>
    <property type="match status" value="1"/>
</dbReference>
<dbReference type="SUPFAM" id="SSF56176">
    <property type="entry name" value="FAD-binding/transporter-associated domain-like"/>
    <property type="match status" value="1"/>
</dbReference>
<dbReference type="SUPFAM" id="SSF55103">
    <property type="entry name" value="FAD-linked oxidases, C-terminal domain"/>
    <property type="match status" value="1"/>
</dbReference>
<dbReference type="PROSITE" id="PS51387">
    <property type="entry name" value="FAD_PCMH"/>
    <property type="match status" value="1"/>
</dbReference>
<gene>
    <name type="primary">D2HGDH</name>
    <name type="ordered locus">Os07g0187200</name>
    <name type="ordered locus">LOC_Os07g08950</name>
    <name type="ORF">OsJ_23376</name>
    <name type="ORF">OSJNBb0084L07.2</name>
    <name type="ORF">P0506C07.26</name>
</gene>
<proteinExistence type="inferred from homology"/>
<sequence length="559" mass="61097">MARRAAAGLLRRHLGPLAAGETLQARGMYPKQYGAANHAFSRFYSIQGQQRSLYGFRTNVETDDTQQSARMNFEVQKRSFSSAAAHVQRNPAYSVLNSDDVSYFKSILGDSGVVQDEDRVSVANMDWMGKYKGSSQLLLLPKSTAEVSKILSYCNSRRLAVVPQGGNTGLVGGSVPVYDEVIISLGGMDKIITFDNVNGILTCEAGCVLENLSSYVENKGFIMPLDLGAKGSCHIGGNISTNAGGLRFIRYGSLHGSVLGLEVVLADGTVLDMLTTLRKDNTGYDLKHLFIGSEGSLGIVTKIAILTPAKLPSTNVAFLSCNDYISCQKLLLAARRSLGEILSAFEFMDRHCINLAMKYLEGVHNPLPVSPFNFYVLIETTGSDESYDKAKLEAFLLRSMEDGLVADGVIAQDISQASNFWRIREGISEASVKVGAVYKYDLSIPVEKLYDIVEEMRSRVGDMGQVLGYGHLGDGNLHLNILSTKYSDKMLAQIEPFVYEWTSKQRGSISAEHGLGLMKAEKIHYSKSSEAVQLMASIKKLLDPNSILNPYKVLPQSVL</sequence>
<accession>Q7XI14</accession>
<accession>B9FVX0</accession>
<keyword id="KW-0274">FAD</keyword>
<keyword id="KW-0285">Flavoprotein</keyword>
<keyword id="KW-0496">Mitochondrion</keyword>
<keyword id="KW-0560">Oxidoreductase</keyword>
<keyword id="KW-1185">Reference proteome</keyword>
<keyword id="KW-0809">Transit peptide</keyword>
<reference key="1">
    <citation type="journal article" date="2005" name="Nature">
        <title>The map-based sequence of the rice genome.</title>
        <authorList>
            <consortium name="International rice genome sequencing project (IRGSP)"/>
        </authorList>
    </citation>
    <scope>NUCLEOTIDE SEQUENCE [LARGE SCALE GENOMIC DNA]</scope>
    <source>
        <strain>cv. Nipponbare</strain>
    </source>
</reference>
<reference key="2">
    <citation type="journal article" date="2013" name="Rice">
        <title>Improvement of the Oryza sativa Nipponbare reference genome using next generation sequence and optical map data.</title>
        <authorList>
            <person name="Kawahara Y."/>
            <person name="de la Bastide M."/>
            <person name="Hamilton J.P."/>
            <person name="Kanamori H."/>
            <person name="McCombie W.R."/>
            <person name="Ouyang S."/>
            <person name="Schwartz D.C."/>
            <person name="Tanaka T."/>
            <person name="Wu J."/>
            <person name="Zhou S."/>
            <person name="Childs K.L."/>
            <person name="Davidson R.M."/>
            <person name="Lin H."/>
            <person name="Quesada-Ocampo L."/>
            <person name="Vaillancourt B."/>
            <person name="Sakai H."/>
            <person name="Lee S.S."/>
            <person name="Kim J."/>
            <person name="Numa H."/>
            <person name="Itoh T."/>
            <person name="Buell C.R."/>
            <person name="Matsumoto T."/>
        </authorList>
    </citation>
    <scope>GENOME REANNOTATION</scope>
    <source>
        <strain>cv. Nipponbare</strain>
    </source>
</reference>
<reference key="3">
    <citation type="journal article" date="2005" name="PLoS Biol.">
        <title>The genomes of Oryza sativa: a history of duplications.</title>
        <authorList>
            <person name="Yu J."/>
            <person name="Wang J."/>
            <person name="Lin W."/>
            <person name="Li S."/>
            <person name="Li H."/>
            <person name="Zhou J."/>
            <person name="Ni P."/>
            <person name="Dong W."/>
            <person name="Hu S."/>
            <person name="Zeng C."/>
            <person name="Zhang J."/>
            <person name="Zhang Y."/>
            <person name="Li R."/>
            <person name="Xu Z."/>
            <person name="Li S."/>
            <person name="Li X."/>
            <person name="Zheng H."/>
            <person name="Cong L."/>
            <person name="Lin L."/>
            <person name="Yin J."/>
            <person name="Geng J."/>
            <person name="Li G."/>
            <person name="Shi J."/>
            <person name="Liu J."/>
            <person name="Lv H."/>
            <person name="Li J."/>
            <person name="Wang J."/>
            <person name="Deng Y."/>
            <person name="Ran L."/>
            <person name="Shi X."/>
            <person name="Wang X."/>
            <person name="Wu Q."/>
            <person name="Li C."/>
            <person name="Ren X."/>
            <person name="Wang J."/>
            <person name="Wang X."/>
            <person name="Li D."/>
            <person name="Liu D."/>
            <person name="Zhang X."/>
            <person name="Ji Z."/>
            <person name="Zhao W."/>
            <person name="Sun Y."/>
            <person name="Zhang Z."/>
            <person name="Bao J."/>
            <person name="Han Y."/>
            <person name="Dong L."/>
            <person name="Ji J."/>
            <person name="Chen P."/>
            <person name="Wu S."/>
            <person name="Liu J."/>
            <person name="Xiao Y."/>
            <person name="Bu D."/>
            <person name="Tan J."/>
            <person name="Yang L."/>
            <person name="Ye C."/>
            <person name="Zhang J."/>
            <person name="Xu J."/>
            <person name="Zhou Y."/>
            <person name="Yu Y."/>
            <person name="Zhang B."/>
            <person name="Zhuang S."/>
            <person name="Wei H."/>
            <person name="Liu B."/>
            <person name="Lei M."/>
            <person name="Yu H."/>
            <person name="Li Y."/>
            <person name="Xu H."/>
            <person name="Wei S."/>
            <person name="He X."/>
            <person name="Fang L."/>
            <person name="Zhang Z."/>
            <person name="Zhang Y."/>
            <person name="Huang X."/>
            <person name="Su Z."/>
            <person name="Tong W."/>
            <person name="Li J."/>
            <person name="Tong Z."/>
            <person name="Li S."/>
            <person name="Ye J."/>
            <person name="Wang L."/>
            <person name="Fang L."/>
            <person name="Lei T."/>
            <person name="Chen C.-S."/>
            <person name="Chen H.-C."/>
            <person name="Xu Z."/>
            <person name="Li H."/>
            <person name="Huang H."/>
            <person name="Zhang F."/>
            <person name="Xu H."/>
            <person name="Li N."/>
            <person name="Zhao C."/>
            <person name="Li S."/>
            <person name="Dong L."/>
            <person name="Huang Y."/>
            <person name="Li L."/>
            <person name="Xi Y."/>
            <person name="Qi Q."/>
            <person name="Li W."/>
            <person name="Zhang B."/>
            <person name="Hu W."/>
            <person name="Zhang Y."/>
            <person name="Tian X."/>
            <person name="Jiao Y."/>
            <person name="Liang X."/>
            <person name="Jin J."/>
            <person name="Gao L."/>
            <person name="Zheng W."/>
            <person name="Hao B."/>
            <person name="Liu S.-M."/>
            <person name="Wang W."/>
            <person name="Yuan L."/>
            <person name="Cao M."/>
            <person name="McDermott J."/>
            <person name="Samudrala R."/>
            <person name="Wang J."/>
            <person name="Wong G.K.-S."/>
            <person name="Yang H."/>
        </authorList>
    </citation>
    <scope>NUCLEOTIDE SEQUENCE [LARGE SCALE GENOMIC DNA]</scope>
    <source>
        <strain>cv. Nipponbare</strain>
    </source>
</reference>
<evidence type="ECO:0000250" key="1"/>
<evidence type="ECO:0000255" key="2"/>
<evidence type="ECO:0000255" key="3">
    <source>
        <dbReference type="PROSITE-ProRule" id="PRU00718"/>
    </source>
</evidence>
<evidence type="ECO:0000305" key="4"/>
<comment type="function">
    <text evidence="1">Catalyzes the oxidation of D-2-hydroxyglutarate to alpha-ketoglutarate.</text>
</comment>
<comment type="catalytic activity">
    <reaction>
        <text>(R)-2-hydroxyglutarate + A = 2-oxoglutarate + AH2</text>
        <dbReference type="Rhea" id="RHEA:38295"/>
        <dbReference type="ChEBI" id="CHEBI:13193"/>
        <dbReference type="ChEBI" id="CHEBI:15801"/>
        <dbReference type="ChEBI" id="CHEBI:16810"/>
        <dbReference type="ChEBI" id="CHEBI:17499"/>
        <dbReference type="EC" id="1.1.99.39"/>
    </reaction>
</comment>
<comment type="cofactor">
    <cofactor evidence="1">
        <name>FAD</name>
        <dbReference type="ChEBI" id="CHEBI:57692"/>
    </cofactor>
    <text evidence="1">Binds 1 FAD per monomer.</text>
</comment>
<comment type="subunit">
    <text evidence="1">Homodimer.</text>
</comment>
<comment type="subcellular location">
    <subcellularLocation>
        <location evidence="4">Mitochondrion</location>
    </subcellularLocation>
</comment>
<comment type="similarity">
    <text evidence="4">Belongs to the FAD-binding oxidoreductase/transferase type 4 family.</text>
</comment>
<comment type="sequence caution" evidence="4">
    <conflict type="erroneous gene model prediction">
        <sequence resource="EMBL-CDS" id="EEE66707"/>
    </conflict>
</comment>
<protein>
    <recommendedName>
        <fullName>Probable D-2-hydroxyglutarate dehydrogenase, mitochondrial</fullName>
        <ecNumber>1.1.99.39</ecNumber>
    </recommendedName>
</protein>